<evidence type="ECO:0000255" key="1">
    <source>
        <dbReference type="HAMAP-Rule" id="MF_01504"/>
    </source>
</evidence>
<evidence type="ECO:0000256" key="2">
    <source>
        <dbReference type="SAM" id="MobiDB-lite"/>
    </source>
</evidence>
<gene>
    <name evidence="1" type="primary">sspK</name>
    <name type="ordered locus">RBAM_008640</name>
</gene>
<reference key="1">
    <citation type="journal article" date="2007" name="Nat. Biotechnol.">
        <title>Comparative analysis of the complete genome sequence of the plant growth-promoting bacterium Bacillus amyloliquefaciens FZB42.</title>
        <authorList>
            <person name="Chen X.H."/>
            <person name="Koumoutsi A."/>
            <person name="Scholz R."/>
            <person name="Eisenreich A."/>
            <person name="Schneider K."/>
            <person name="Heinemeyer I."/>
            <person name="Morgenstern B."/>
            <person name="Voss B."/>
            <person name="Hess W.R."/>
            <person name="Reva O."/>
            <person name="Junge H."/>
            <person name="Voigt B."/>
            <person name="Jungblut P.R."/>
            <person name="Vater J."/>
            <person name="Suessmuth R."/>
            <person name="Liesegang H."/>
            <person name="Strittmatter A."/>
            <person name="Gottschalk G."/>
            <person name="Borriss R."/>
        </authorList>
    </citation>
    <scope>NUCLEOTIDE SEQUENCE [LARGE SCALE GENOMIC DNA]</scope>
    <source>
        <strain>DSM 23117 / BGSC 10A6 / LMG 26770 / FZB42</strain>
    </source>
</reference>
<keyword id="KW-0749">Sporulation</keyword>
<proteinExistence type="inferred from homology"/>
<name>SSPK_BACVZ</name>
<accession>A7Z2M2</accession>
<sequence>MVRNKAKGFPNQNNNKFEGEPRAKDDYASKRADGSINSHPQERMRASGRR</sequence>
<dbReference type="EMBL" id="CP000560">
    <property type="protein sequence ID" value="ABS73248.1"/>
    <property type="molecule type" value="Genomic_DNA"/>
</dbReference>
<dbReference type="RefSeq" id="WP_003155495.1">
    <property type="nucleotide sequence ID" value="NC_009725.2"/>
</dbReference>
<dbReference type="GeneID" id="93079997"/>
<dbReference type="KEGG" id="bay:RBAM_008640"/>
<dbReference type="HOGENOM" id="CLU_204383_0_0_9"/>
<dbReference type="Proteomes" id="UP000001120">
    <property type="component" value="Chromosome"/>
</dbReference>
<dbReference type="GO" id="GO:0042601">
    <property type="term" value="C:endospore-forming forespore"/>
    <property type="evidence" value="ECO:0007669"/>
    <property type="project" value="InterPro"/>
</dbReference>
<dbReference type="GO" id="GO:0030436">
    <property type="term" value="P:asexual sporulation"/>
    <property type="evidence" value="ECO:0007669"/>
    <property type="project" value="UniProtKB-UniRule"/>
</dbReference>
<dbReference type="GO" id="GO:0030435">
    <property type="term" value="P:sporulation resulting in formation of a cellular spore"/>
    <property type="evidence" value="ECO:0007669"/>
    <property type="project" value="UniProtKB-KW"/>
</dbReference>
<dbReference type="HAMAP" id="MF_01504">
    <property type="entry name" value="SspK"/>
    <property type="match status" value="1"/>
</dbReference>
<dbReference type="InterPro" id="IPR012611">
    <property type="entry name" value="SASP_SspK"/>
</dbReference>
<dbReference type="NCBIfam" id="NF002843">
    <property type="entry name" value="PRK03081.1"/>
    <property type="match status" value="1"/>
</dbReference>
<dbReference type="NCBIfam" id="TIGR03091">
    <property type="entry name" value="SASP_sspK"/>
    <property type="match status" value="1"/>
</dbReference>
<dbReference type="Pfam" id="PF08176">
    <property type="entry name" value="SspK"/>
    <property type="match status" value="1"/>
</dbReference>
<organism>
    <name type="scientific">Bacillus velezensis (strain DSM 23117 / BGSC 10A6 / LMG 26770 / FZB42)</name>
    <name type="common">Bacillus amyloliquefaciens subsp. plantarum</name>
    <dbReference type="NCBI Taxonomy" id="326423"/>
    <lineage>
        <taxon>Bacteria</taxon>
        <taxon>Bacillati</taxon>
        <taxon>Bacillota</taxon>
        <taxon>Bacilli</taxon>
        <taxon>Bacillales</taxon>
        <taxon>Bacillaceae</taxon>
        <taxon>Bacillus</taxon>
        <taxon>Bacillus amyloliquefaciens group</taxon>
    </lineage>
</organism>
<comment type="subcellular location">
    <subcellularLocation>
        <location evidence="1">Spore core</location>
    </subcellularLocation>
</comment>
<comment type="induction">
    <text evidence="1">Expressed only in the forespore compartment of sporulating cells.</text>
</comment>
<comment type="similarity">
    <text evidence="1">Belongs to the SspK family.</text>
</comment>
<protein>
    <recommendedName>
        <fullName evidence="1">Small, acid-soluble spore protein K</fullName>
        <shortName evidence="1">SASP K</shortName>
    </recommendedName>
</protein>
<feature type="chain" id="PRO_0000315204" description="Small, acid-soluble spore protein K">
    <location>
        <begin position="1"/>
        <end position="50"/>
    </location>
</feature>
<feature type="region of interest" description="Disordered" evidence="2">
    <location>
        <begin position="1"/>
        <end position="50"/>
    </location>
</feature>
<feature type="compositionally biased region" description="Basic and acidic residues" evidence="2">
    <location>
        <begin position="17"/>
        <end position="33"/>
    </location>
</feature>
<feature type="compositionally biased region" description="Basic and acidic residues" evidence="2">
    <location>
        <begin position="40"/>
        <end position="50"/>
    </location>
</feature>